<accession>O66646</accession>
<feature type="chain" id="PRO_0000092417" description="Lipoprotein-releasing system ATP-binding protein LolD">
    <location>
        <begin position="1"/>
        <end position="224"/>
    </location>
</feature>
<feature type="domain" description="ABC transporter" evidence="1">
    <location>
        <begin position="5"/>
        <end position="224"/>
    </location>
</feature>
<feature type="binding site" evidence="1">
    <location>
        <begin position="37"/>
        <end position="44"/>
    </location>
    <ligand>
        <name>ATP</name>
        <dbReference type="ChEBI" id="CHEBI:30616"/>
    </ligand>
</feature>
<feature type="strand" evidence="2">
    <location>
        <begin position="3"/>
        <end position="14"/>
    </location>
</feature>
<feature type="strand" evidence="2">
    <location>
        <begin position="17"/>
        <end position="28"/>
    </location>
</feature>
<feature type="strand" evidence="2">
    <location>
        <begin position="32"/>
        <end position="37"/>
    </location>
</feature>
<feature type="helix" evidence="2">
    <location>
        <begin position="43"/>
        <end position="50"/>
    </location>
</feature>
<feature type="strand" evidence="2">
    <location>
        <begin position="57"/>
        <end position="63"/>
    </location>
</feature>
<feature type="helix" evidence="2">
    <location>
        <begin position="73"/>
        <end position="83"/>
    </location>
</feature>
<feature type="strand" evidence="2">
    <location>
        <begin position="84"/>
        <end position="87"/>
    </location>
</feature>
<feature type="helix" evidence="2">
    <location>
        <begin position="99"/>
        <end position="109"/>
    </location>
</feature>
<feature type="helix" evidence="2">
    <location>
        <begin position="114"/>
        <end position="127"/>
    </location>
</feature>
<feature type="helix" evidence="2">
    <location>
        <begin position="138"/>
        <end position="140"/>
    </location>
</feature>
<feature type="helix" evidence="2">
    <location>
        <begin position="143"/>
        <end position="154"/>
    </location>
</feature>
<feature type="turn" evidence="2">
    <location>
        <begin position="155"/>
        <end position="157"/>
    </location>
</feature>
<feature type="strand" evidence="2">
    <location>
        <begin position="160"/>
        <end position="166"/>
    </location>
</feature>
<feature type="turn" evidence="2">
    <location>
        <begin position="167"/>
        <end position="170"/>
    </location>
</feature>
<feature type="helix" evidence="2">
    <location>
        <begin position="173"/>
        <end position="188"/>
    </location>
</feature>
<feature type="strand" evidence="2">
    <location>
        <begin position="192"/>
        <end position="196"/>
    </location>
</feature>
<feature type="helix" evidence="2">
    <location>
        <begin position="200"/>
        <end position="203"/>
    </location>
</feature>
<feature type="strand" evidence="2">
    <location>
        <begin position="206"/>
        <end position="213"/>
    </location>
</feature>
<feature type="strand" evidence="2">
    <location>
        <begin position="216"/>
        <end position="222"/>
    </location>
</feature>
<gene>
    <name evidence="1" type="primary">lolD</name>
    <name type="ordered locus">aq_297</name>
</gene>
<name>LOLD_AQUAE</name>
<sequence>MAEILRAENIKKVIRGYEILKGISLSVKKGEFVSIIGASGSGKSTLLYILGLLDAPTEGKVFLEGKEVDYTNEKELSLLRNRKLGFVFQFHYLIPELTALENVIVPMLKMGKPKKEAKERGEYLLSELGLGDKLSRKPYELSGGEQQRVAIARALANEPILLFADEPTGNLDSANTKRVMDIFLKINEGGTSIVMVTHERELAELTHRTLEMKDGKVVGEITRV</sequence>
<evidence type="ECO:0000255" key="1">
    <source>
        <dbReference type="HAMAP-Rule" id="MF_01708"/>
    </source>
</evidence>
<evidence type="ECO:0007829" key="2">
    <source>
        <dbReference type="PDB" id="2PCJ"/>
    </source>
</evidence>
<organism>
    <name type="scientific">Aquifex aeolicus (strain VF5)</name>
    <dbReference type="NCBI Taxonomy" id="224324"/>
    <lineage>
        <taxon>Bacteria</taxon>
        <taxon>Pseudomonadati</taxon>
        <taxon>Aquificota</taxon>
        <taxon>Aquificia</taxon>
        <taxon>Aquificales</taxon>
        <taxon>Aquificaceae</taxon>
        <taxon>Aquifex</taxon>
    </lineage>
</organism>
<reference key="1">
    <citation type="journal article" date="1998" name="Nature">
        <title>The complete genome of the hyperthermophilic bacterium Aquifex aeolicus.</title>
        <authorList>
            <person name="Deckert G."/>
            <person name="Warren P.V."/>
            <person name="Gaasterland T."/>
            <person name="Young W.G."/>
            <person name="Lenox A.L."/>
            <person name="Graham D.E."/>
            <person name="Overbeek R."/>
            <person name="Snead M.A."/>
            <person name="Keller M."/>
            <person name="Aujay M."/>
            <person name="Huber R."/>
            <person name="Feldman R.A."/>
            <person name="Short J.M."/>
            <person name="Olsen G.J."/>
            <person name="Swanson R.V."/>
        </authorList>
    </citation>
    <scope>NUCLEOTIDE SEQUENCE [LARGE SCALE GENOMIC DNA]</scope>
    <source>
        <strain>VF5</strain>
    </source>
</reference>
<keyword id="KW-0002">3D-structure</keyword>
<keyword id="KW-0067">ATP-binding</keyword>
<keyword id="KW-0997">Cell inner membrane</keyword>
<keyword id="KW-1003">Cell membrane</keyword>
<keyword id="KW-0472">Membrane</keyword>
<keyword id="KW-0547">Nucleotide-binding</keyword>
<keyword id="KW-1185">Reference proteome</keyword>
<keyword id="KW-1278">Translocase</keyword>
<keyword id="KW-0813">Transport</keyword>
<protein>
    <recommendedName>
        <fullName evidence="1">Lipoprotein-releasing system ATP-binding protein LolD</fullName>
        <ecNumber evidence="1">7.6.2.-</ecNumber>
    </recommendedName>
</protein>
<comment type="function">
    <text evidence="1">Part of the ABC transporter complex LolCDE involved in the translocation of mature outer membrane-directed lipoproteins, from the inner membrane to the periplasmic chaperone, LolA. Responsible for the formation of the LolA-lipoprotein complex in an ATP-dependent manner.</text>
</comment>
<comment type="subunit">
    <text evidence="1">The complex is composed of two ATP-binding proteins (LolD) and two transmembrane proteins (LolC and LolE).</text>
</comment>
<comment type="subcellular location">
    <subcellularLocation>
        <location evidence="1">Cell inner membrane</location>
        <topology evidence="1">Peripheral membrane protein</topology>
    </subcellularLocation>
</comment>
<comment type="similarity">
    <text evidence="1">Belongs to the ABC transporter superfamily. Lipoprotein translocase (TC 3.A.1.125) family.</text>
</comment>
<proteinExistence type="evidence at protein level"/>
<dbReference type="EC" id="7.6.2.-" evidence="1"/>
<dbReference type="EMBL" id="AE000657">
    <property type="protein sequence ID" value="AAC06596.1"/>
    <property type="molecule type" value="Genomic_DNA"/>
</dbReference>
<dbReference type="PIR" id="B70327">
    <property type="entry name" value="B70327"/>
</dbReference>
<dbReference type="RefSeq" id="NP_213206.1">
    <property type="nucleotide sequence ID" value="NC_000918.1"/>
</dbReference>
<dbReference type="RefSeq" id="WP_010880144.1">
    <property type="nucleotide sequence ID" value="NC_000918.1"/>
</dbReference>
<dbReference type="PDB" id="2PCJ">
    <property type="method" value="X-ray"/>
    <property type="resolution" value="1.70 A"/>
    <property type="chains" value="A/B=1-224"/>
</dbReference>
<dbReference type="PDB" id="2PCL">
    <property type="method" value="X-ray"/>
    <property type="resolution" value="1.70 A"/>
    <property type="chains" value="A=1-224"/>
</dbReference>
<dbReference type="PDBsum" id="2PCJ"/>
<dbReference type="PDBsum" id="2PCL"/>
<dbReference type="SMR" id="O66646"/>
<dbReference type="FunCoup" id="O66646">
    <property type="interactions" value="267"/>
</dbReference>
<dbReference type="STRING" id="224324.aq_297"/>
<dbReference type="EnsemblBacteria" id="AAC06596">
    <property type="protein sequence ID" value="AAC06596"/>
    <property type="gene ID" value="aq_297"/>
</dbReference>
<dbReference type="KEGG" id="aae:aq_297"/>
<dbReference type="eggNOG" id="COG1136">
    <property type="taxonomic scope" value="Bacteria"/>
</dbReference>
<dbReference type="HOGENOM" id="CLU_000604_1_22_0"/>
<dbReference type="InParanoid" id="O66646"/>
<dbReference type="OrthoDB" id="9802264at2"/>
<dbReference type="EvolutionaryTrace" id="O66646"/>
<dbReference type="Proteomes" id="UP000000798">
    <property type="component" value="Chromosome"/>
</dbReference>
<dbReference type="GO" id="GO:0005886">
    <property type="term" value="C:plasma membrane"/>
    <property type="evidence" value="ECO:0000318"/>
    <property type="project" value="GO_Central"/>
</dbReference>
<dbReference type="GO" id="GO:0005524">
    <property type="term" value="F:ATP binding"/>
    <property type="evidence" value="ECO:0007669"/>
    <property type="project" value="UniProtKB-KW"/>
</dbReference>
<dbReference type="GO" id="GO:0016887">
    <property type="term" value="F:ATP hydrolysis activity"/>
    <property type="evidence" value="ECO:0007669"/>
    <property type="project" value="InterPro"/>
</dbReference>
<dbReference type="GO" id="GO:0022857">
    <property type="term" value="F:transmembrane transporter activity"/>
    <property type="evidence" value="ECO:0000318"/>
    <property type="project" value="GO_Central"/>
</dbReference>
<dbReference type="GO" id="GO:0055085">
    <property type="term" value="P:transmembrane transport"/>
    <property type="evidence" value="ECO:0000318"/>
    <property type="project" value="GO_Central"/>
</dbReference>
<dbReference type="CDD" id="cd03255">
    <property type="entry name" value="ABC_MJ0796_LolCDE_FtsE"/>
    <property type="match status" value="1"/>
</dbReference>
<dbReference type="FunFam" id="3.40.50.300:FF:000230">
    <property type="entry name" value="Lipoprotein-releasing system ATP-binding protein LolD"/>
    <property type="match status" value="1"/>
</dbReference>
<dbReference type="Gene3D" id="3.40.50.300">
    <property type="entry name" value="P-loop containing nucleotide triphosphate hydrolases"/>
    <property type="match status" value="1"/>
</dbReference>
<dbReference type="InterPro" id="IPR003593">
    <property type="entry name" value="AAA+_ATPase"/>
</dbReference>
<dbReference type="InterPro" id="IPR003439">
    <property type="entry name" value="ABC_transporter-like_ATP-bd"/>
</dbReference>
<dbReference type="InterPro" id="IPR017871">
    <property type="entry name" value="ABC_transporter-like_CS"/>
</dbReference>
<dbReference type="InterPro" id="IPR017911">
    <property type="entry name" value="MacB-like_ATP-bd"/>
</dbReference>
<dbReference type="InterPro" id="IPR027417">
    <property type="entry name" value="P-loop_NTPase"/>
</dbReference>
<dbReference type="PANTHER" id="PTHR42798:SF7">
    <property type="entry name" value="ALPHA-D-RIBOSE 1-METHYLPHOSPHONATE 5-TRIPHOSPHATE SYNTHASE SUBUNIT PHNL"/>
    <property type="match status" value="1"/>
</dbReference>
<dbReference type="PANTHER" id="PTHR42798">
    <property type="entry name" value="LIPOPROTEIN-RELEASING SYSTEM ATP-BINDING PROTEIN LOLD"/>
    <property type="match status" value="1"/>
</dbReference>
<dbReference type="Pfam" id="PF00005">
    <property type="entry name" value="ABC_tran"/>
    <property type="match status" value="1"/>
</dbReference>
<dbReference type="SMART" id="SM00382">
    <property type="entry name" value="AAA"/>
    <property type="match status" value="1"/>
</dbReference>
<dbReference type="SUPFAM" id="SSF52540">
    <property type="entry name" value="P-loop containing nucleoside triphosphate hydrolases"/>
    <property type="match status" value="1"/>
</dbReference>
<dbReference type="PROSITE" id="PS00211">
    <property type="entry name" value="ABC_TRANSPORTER_1"/>
    <property type="match status" value="1"/>
</dbReference>
<dbReference type="PROSITE" id="PS50893">
    <property type="entry name" value="ABC_TRANSPORTER_2"/>
    <property type="match status" value="1"/>
</dbReference>
<dbReference type="PROSITE" id="PS51244">
    <property type="entry name" value="LOLD"/>
    <property type="match status" value="1"/>
</dbReference>